<comment type="function">
    <text evidence="1">Catalyzes the conversion of dethiobiotin (DTB) to biotin by the insertion of a sulfur atom into dethiobiotin via a radical-based mechanism.</text>
</comment>
<comment type="catalytic activity">
    <reaction evidence="1">
        <text>(4R,5S)-dethiobiotin + (sulfur carrier)-SH + 2 reduced [2Fe-2S]-[ferredoxin] + 2 S-adenosyl-L-methionine = (sulfur carrier)-H + biotin + 2 5'-deoxyadenosine + 2 L-methionine + 2 oxidized [2Fe-2S]-[ferredoxin]</text>
        <dbReference type="Rhea" id="RHEA:22060"/>
        <dbReference type="Rhea" id="RHEA-COMP:10000"/>
        <dbReference type="Rhea" id="RHEA-COMP:10001"/>
        <dbReference type="Rhea" id="RHEA-COMP:14737"/>
        <dbReference type="Rhea" id="RHEA-COMP:14739"/>
        <dbReference type="ChEBI" id="CHEBI:17319"/>
        <dbReference type="ChEBI" id="CHEBI:29917"/>
        <dbReference type="ChEBI" id="CHEBI:33737"/>
        <dbReference type="ChEBI" id="CHEBI:33738"/>
        <dbReference type="ChEBI" id="CHEBI:57586"/>
        <dbReference type="ChEBI" id="CHEBI:57844"/>
        <dbReference type="ChEBI" id="CHEBI:59789"/>
        <dbReference type="ChEBI" id="CHEBI:64428"/>
        <dbReference type="ChEBI" id="CHEBI:149473"/>
        <dbReference type="EC" id="2.8.1.6"/>
    </reaction>
</comment>
<comment type="cofactor">
    <cofactor evidence="1">
        <name>[4Fe-4S] cluster</name>
        <dbReference type="ChEBI" id="CHEBI:49883"/>
    </cofactor>
    <text evidence="1">Binds 1 [4Fe-4S] cluster. The cluster is coordinated with 3 cysteines and an exchangeable S-adenosyl-L-methionine.</text>
</comment>
<comment type="cofactor">
    <cofactor evidence="1">
        <name>[2Fe-2S] cluster</name>
        <dbReference type="ChEBI" id="CHEBI:190135"/>
    </cofactor>
    <text evidence="1">Binds 1 [2Fe-2S] cluster. The cluster is coordinated with 3 cysteines and 1 arginine.</text>
</comment>
<comment type="pathway">
    <text evidence="1">Cofactor biosynthesis; biotin biosynthesis; biotin from 7,8-diaminononanoate: step 2/2.</text>
</comment>
<comment type="subunit">
    <text evidence="1">Homodimer.</text>
</comment>
<comment type="similarity">
    <text evidence="1">Belongs to the radical SAM superfamily. Biotin synthase family.</text>
</comment>
<comment type="sequence caution" evidence="3">
    <conflict type="erroneous initiation">
        <sequence resource="EMBL-CDS" id="BAG32653"/>
    </conflict>
</comment>
<organism>
    <name type="scientific">Porphyromonas gingivalis (strain ATCC 33277 / DSM 20709 / CIP 103683 / JCM 12257 / NCTC 11834 / 2561)</name>
    <dbReference type="NCBI Taxonomy" id="431947"/>
    <lineage>
        <taxon>Bacteria</taxon>
        <taxon>Pseudomonadati</taxon>
        <taxon>Bacteroidota</taxon>
        <taxon>Bacteroidia</taxon>
        <taxon>Bacteroidales</taxon>
        <taxon>Porphyromonadaceae</taxon>
        <taxon>Porphyromonas</taxon>
    </lineage>
</organism>
<dbReference type="EC" id="2.8.1.6" evidence="1"/>
<dbReference type="EMBL" id="AP009380">
    <property type="protein sequence ID" value="BAG32653.1"/>
    <property type="status" value="ALT_INIT"/>
    <property type="molecule type" value="Genomic_DNA"/>
</dbReference>
<dbReference type="RefSeq" id="WP_039416879.1">
    <property type="nucleotide sequence ID" value="NC_010729.1"/>
</dbReference>
<dbReference type="SMR" id="B2RH08"/>
<dbReference type="DNASU" id="6330269"/>
<dbReference type="GeneID" id="29255385"/>
<dbReference type="KEGG" id="pgn:PGN_0134"/>
<dbReference type="eggNOG" id="COG0502">
    <property type="taxonomic scope" value="Bacteria"/>
</dbReference>
<dbReference type="HOGENOM" id="CLU_033172_2_1_10"/>
<dbReference type="OrthoDB" id="9786826at2"/>
<dbReference type="BioCyc" id="PGIN431947:G1G2V-153-MONOMER"/>
<dbReference type="UniPathway" id="UPA00078">
    <property type="reaction ID" value="UER00162"/>
</dbReference>
<dbReference type="Proteomes" id="UP000008842">
    <property type="component" value="Chromosome"/>
</dbReference>
<dbReference type="GO" id="GO:0051537">
    <property type="term" value="F:2 iron, 2 sulfur cluster binding"/>
    <property type="evidence" value="ECO:0007669"/>
    <property type="project" value="UniProtKB-KW"/>
</dbReference>
<dbReference type="GO" id="GO:0051539">
    <property type="term" value="F:4 iron, 4 sulfur cluster binding"/>
    <property type="evidence" value="ECO:0007669"/>
    <property type="project" value="UniProtKB-KW"/>
</dbReference>
<dbReference type="GO" id="GO:0004076">
    <property type="term" value="F:biotin synthase activity"/>
    <property type="evidence" value="ECO:0007669"/>
    <property type="project" value="UniProtKB-UniRule"/>
</dbReference>
<dbReference type="GO" id="GO:0005506">
    <property type="term" value="F:iron ion binding"/>
    <property type="evidence" value="ECO:0007669"/>
    <property type="project" value="UniProtKB-UniRule"/>
</dbReference>
<dbReference type="GO" id="GO:0009102">
    <property type="term" value="P:biotin biosynthetic process"/>
    <property type="evidence" value="ECO:0007669"/>
    <property type="project" value="UniProtKB-UniRule"/>
</dbReference>
<dbReference type="CDD" id="cd01335">
    <property type="entry name" value="Radical_SAM"/>
    <property type="match status" value="1"/>
</dbReference>
<dbReference type="Gene3D" id="3.20.20.70">
    <property type="entry name" value="Aldolase class I"/>
    <property type="match status" value="1"/>
</dbReference>
<dbReference type="HAMAP" id="MF_01694">
    <property type="entry name" value="BioB"/>
    <property type="match status" value="1"/>
</dbReference>
<dbReference type="InterPro" id="IPR013785">
    <property type="entry name" value="Aldolase_TIM"/>
</dbReference>
<dbReference type="InterPro" id="IPR010722">
    <property type="entry name" value="BATS_dom"/>
</dbReference>
<dbReference type="InterPro" id="IPR002684">
    <property type="entry name" value="Biotin_synth/BioAB"/>
</dbReference>
<dbReference type="InterPro" id="IPR024177">
    <property type="entry name" value="Biotin_synthase"/>
</dbReference>
<dbReference type="InterPro" id="IPR006638">
    <property type="entry name" value="Elp3/MiaA/NifB-like_rSAM"/>
</dbReference>
<dbReference type="InterPro" id="IPR007197">
    <property type="entry name" value="rSAM"/>
</dbReference>
<dbReference type="NCBIfam" id="TIGR00433">
    <property type="entry name" value="bioB"/>
    <property type="match status" value="1"/>
</dbReference>
<dbReference type="PANTHER" id="PTHR22976">
    <property type="entry name" value="BIOTIN SYNTHASE"/>
    <property type="match status" value="1"/>
</dbReference>
<dbReference type="PANTHER" id="PTHR22976:SF2">
    <property type="entry name" value="BIOTIN SYNTHASE, MITOCHONDRIAL"/>
    <property type="match status" value="1"/>
</dbReference>
<dbReference type="Pfam" id="PF06968">
    <property type="entry name" value="BATS"/>
    <property type="match status" value="1"/>
</dbReference>
<dbReference type="Pfam" id="PF04055">
    <property type="entry name" value="Radical_SAM"/>
    <property type="match status" value="1"/>
</dbReference>
<dbReference type="PIRSF" id="PIRSF001619">
    <property type="entry name" value="Biotin_synth"/>
    <property type="match status" value="1"/>
</dbReference>
<dbReference type="SFLD" id="SFLDG01278">
    <property type="entry name" value="biotin_synthase_like"/>
    <property type="match status" value="1"/>
</dbReference>
<dbReference type="SFLD" id="SFLDS00029">
    <property type="entry name" value="Radical_SAM"/>
    <property type="match status" value="1"/>
</dbReference>
<dbReference type="SMART" id="SM00876">
    <property type="entry name" value="BATS"/>
    <property type="match status" value="1"/>
</dbReference>
<dbReference type="SMART" id="SM00729">
    <property type="entry name" value="Elp3"/>
    <property type="match status" value="1"/>
</dbReference>
<dbReference type="SUPFAM" id="SSF102114">
    <property type="entry name" value="Radical SAM enzymes"/>
    <property type="match status" value="1"/>
</dbReference>
<dbReference type="PROSITE" id="PS51918">
    <property type="entry name" value="RADICAL_SAM"/>
    <property type="match status" value="1"/>
</dbReference>
<proteinExistence type="inferred from homology"/>
<feature type="chain" id="PRO_0000381532" description="Biotin synthase">
    <location>
        <begin position="1"/>
        <end position="330"/>
    </location>
</feature>
<feature type="domain" description="Radical SAM core" evidence="2">
    <location>
        <begin position="43"/>
        <end position="272"/>
    </location>
</feature>
<feature type="binding site" evidence="1">
    <location>
        <position position="61"/>
    </location>
    <ligand>
        <name>[4Fe-4S] cluster</name>
        <dbReference type="ChEBI" id="CHEBI:49883"/>
        <note>4Fe-4S-S-AdoMet</note>
    </ligand>
</feature>
<feature type="binding site" evidence="1">
    <location>
        <position position="65"/>
    </location>
    <ligand>
        <name>[4Fe-4S] cluster</name>
        <dbReference type="ChEBI" id="CHEBI:49883"/>
        <note>4Fe-4S-S-AdoMet</note>
    </ligand>
</feature>
<feature type="binding site" evidence="1">
    <location>
        <position position="68"/>
    </location>
    <ligand>
        <name>[4Fe-4S] cluster</name>
        <dbReference type="ChEBI" id="CHEBI:49883"/>
        <note>4Fe-4S-S-AdoMet</note>
    </ligand>
</feature>
<feature type="binding site" evidence="1">
    <location>
        <position position="105"/>
    </location>
    <ligand>
        <name>[2Fe-2S] cluster</name>
        <dbReference type="ChEBI" id="CHEBI:190135"/>
    </ligand>
</feature>
<feature type="binding site" evidence="1">
    <location>
        <position position="137"/>
    </location>
    <ligand>
        <name>[2Fe-2S] cluster</name>
        <dbReference type="ChEBI" id="CHEBI:190135"/>
    </ligand>
</feature>
<feature type="binding site" evidence="1">
    <location>
        <position position="197"/>
    </location>
    <ligand>
        <name>[2Fe-2S] cluster</name>
        <dbReference type="ChEBI" id="CHEBI:190135"/>
    </ligand>
</feature>
<feature type="binding site" evidence="1">
    <location>
        <position position="267"/>
    </location>
    <ligand>
        <name>[2Fe-2S] cluster</name>
        <dbReference type="ChEBI" id="CHEBI:190135"/>
    </ligand>
</feature>
<protein>
    <recommendedName>
        <fullName evidence="1">Biotin synthase</fullName>
        <ecNumber evidence="1">2.8.1.6</ecNumber>
    </recommendedName>
</protein>
<reference key="1">
    <citation type="journal article" date="2008" name="DNA Res.">
        <title>Determination of the genome sequence of Porphyromonas gingivalis strain ATCC 33277 and genomic comparison with strain W83 revealed extensive genome rearrangements in P. gingivalis.</title>
        <authorList>
            <person name="Naito M."/>
            <person name="Hirakawa H."/>
            <person name="Yamashita A."/>
            <person name="Ohara N."/>
            <person name="Shoji M."/>
            <person name="Yukitake H."/>
            <person name="Nakayama K."/>
            <person name="Toh H."/>
            <person name="Yoshimura F."/>
            <person name="Kuhara S."/>
            <person name="Hattori M."/>
            <person name="Hayashi T."/>
            <person name="Nakayama K."/>
        </authorList>
    </citation>
    <scope>NUCLEOTIDE SEQUENCE [LARGE SCALE GENOMIC DNA]</scope>
    <source>
        <strain>ATCC 33277 / DSM 20709 / CIP 103683 / JCM 12257 / NCTC 11834 / 2561</strain>
    </source>
</reference>
<gene>
    <name evidence="1" type="primary">bioB</name>
    <name type="ordered locus">PGN_0134</name>
</gene>
<evidence type="ECO:0000255" key="1">
    <source>
        <dbReference type="HAMAP-Rule" id="MF_01694"/>
    </source>
</evidence>
<evidence type="ECO:0000255" key="2">
    <source>
        <dbReference type="PROSITE-ProRule" id="PRU01266"/>
    </source>
</evidence>
<evidence type="ECO:0000305" key="3"/>
<name>BIOB_PORG3</name>
<sequence length="330" mass="36649">MIQTIENRLINGGEPTFEEALLLASSADKEALYETAHRITRHFMGDKFDTCSIINAKSGNCPEDCKWCAQSRHYATSIEKYGLLSATVCAEQAAYNRRQGIGRFSLVASGRTASMNEIRQMAESFRTIKQRTDIKCCASLGLLSEEKLQILFDNGVTTYHCNMETAPSFFPSLCSTHTQEEKLATIRAARRVGMRVCSGGIIGMGETMEQRIEFAFFLHSINVYSIPINILQPIPGTPLEKTPPLSEEEYLTTVALFRLINPRAFLRFSGGRAQLSPAVQRKAIYIGINAAITGDLLTTTGSKAAEDMQLARECGFQVTNDTDWEVSYDH</sequence>
<accession>B2RH08</accession>
<keyword id="KW-0001">2Fe-2S</keyword>
<keyword id="KW-0004">4Fe-4S</keyword>
<keyword id="KW-0093">Biotin biosynthesis</keyword>
<keyword id="KW-0408">Iron</keyword>
<keyword id="KW-0411">Iron-sulfur</keyword>
<keyword id="KW-0479">Metal-binding</keyword>
<keyword id="KW-0949">S-adenosyl-L-methionine</keyword>
<keyword id="KW-0808">Transferase</keyword>